<keyword id="KW-0106">Calcium</keyword>
<keyword id="KW-0963">Cytoplasm</keyword>
<keyword id="KW-0449">Lipoprotein</keyword>
<keyword id="KW-0472">Membrane</keyword>
<keyword id="KW-0479">Metal-binding</keyword>
<keyword id="KW-0496">Mitochondrion</keyword>
<keyword id="KW-0507">mRNA processing</keyword>
<keyword id="KW-0519">Myristate</keyword>
<keyword id="KW-0597">Phosphoprotein</keyword>
<keyword id="KW-1185">Reference proteome</keyword>
<keyword id="KW-0703">Sarcoplasmic reticulum</keyword>
<keyword id="KW-0832">Ubl conjugation</keyword>
<comment type="function">
    <text evidence="1 2 5 7 8 9 11 15">Apoptosis repressor that blocks multiple modes of cell death. Inhibits extrinsic apoptotic pathways through two different ways. Firstly by interacting with FAS and FADD upon FAS activation blocking death-inducing signaling complex (DISC) assembly (PubMed:15383280). Secondly by interacting with CASP8 in a mitochondria localization- and phosphorylation-dependent manner, limiting the amount of soluble CASP8 available for DISC-mediated activation (PubMed:12191471). Inhibits intrinsic apoptotic pathway in response to a wide range of stresses, through its interaction with BAX resulting in BAX inactivation, preventing mitochondrial dysfunction and release of pro-apoptotic factors (PubMed:15383280). Inhibits calcium-mediated cell death by functioning as a cytosolic calcium buffer, dissociating its interaction with CASP8 and maintaining calcium homeostasis (PubMed:23382383). Negatively regulates oxidative stress-induced apoptosis by phosphorylation-dependent suppression of the mitochondria-mediated intrinsic pathway, by blocking CASP2 activation and BAX translocation (PubMed:16639714). Negatively regulates hypoxia-induced apoptosis in part by inhibiting the release of cytochrome c from mitochondria in a caspase-independent manner (PubMed:10590251). Also inhibits TNF-induced necrosis by preventing TNF-signaling pathway through TNFRSF1A interaction abrogating the recruitment of RIPK1 to complex I (By similarity). Finally through its role as apoptosis repressor, promotes vascular remodeling through inhibition of apoptosis and stimulation of proliferation, in response to hypoxia (By similarity). Inhibits too myoblast differentiation through caspase inhibition (PubMed:17292893).</text>
</comment>
<comment type="subunit">
    <text evidence="1 2 6 8 9 12 16">Oligomerizes (via CARD doamin) (By similarity). Interacts (via CARD domain) with CASP2; inhibits CASP2 activity in a phosphorylation-dependent manner. Interacts with CASP8; decreases CASP8 activity in a mitochondria localization- and phosphorylation-dependent manner and this interaction is dissociated by calcium. Interacts with TFPT; translocates NOL3 into the nucleus and negatively regulated TFPT-induced cell death. Interacts directly (via CARD domain) with FAS and FADD (via DED domain); inhibits death-inducing signaling complex (DISC) assembly by inhibiting the increase in FAS-FADD binding induced by FAS activation. Interacts (via CARD domain) with BAX (via a C-terminal 33 residues); inhibits BAX activation and translocation and consequently cytochrome c release from mitochondria. Interacts with PPM1G; may dephosphorylate NOL3. Interacts (via CARD domain) with BBC3 (via BH3 domain); preventing the association of BBC3 with BCL2 and resulting in activation of CASP8. Interacts (via CARD domain) with BAD(via BH3 domain); preventing the association of BAD with BCL2. Interacts directly (via CARD domain) with TNFRSF1A; inhibits TNF-signaling pathway (By similarity).</text>
</comment>
<comment type="subcellular location">
    <subcellularLocation>
        <location evidence="1 5 7">Cytoplasm</location>
    </subcellularLocation>
    <subcellularLocation>
        <location evidence="5 7 9">Mitochondrion</location>
    </subcellularLocation>
    <subcellularLocation>
        <location evidence="15">Sarcoplasmic reticulum</location>
    </subcellularLocation>
    <subcellularLocation>
        <location evidence="1">Membrane</location>
        <topology evidence="1">Lipid-anchor</topology>
    </subcellularLocation>
    <text evidence="7 9">Phosphorylation at Thr-149 results in translocation to mitochondria (PubMed:12191471). Colocalized with mitochondria in response to oxidative stress (PubMed:16639714).</text>
</comment>
<comment type="tissue specificity">
    <text evidence="5">Highly expressed in skeletal muscle, heart and medulla.</text>
</comment>
<comment type="induction">
    <text evidence="12 14 15">Increased by chronic hypoxia (PubMed:22082675). Activated by FOXO3 (PubMed:23382383). Negatively regulated by TP53 (PubMed:17998337).</text>
</comment>
<comment type="domain">
    <text evidence="1 2 8">CARD is critical for both extrinsic and intrinsic apoptotic pathways (PubMed:15383280). CARD domain mediates a protective effect against myocardial ischemia/reperfusion, oxidative stress and TNF-induced necrosis (By similarity). The C-terminal domain (amino acids 99 to 221) is involved in calcium binding and plays a protective role in calcium-mediated cell death (By similarity).</text>
</comment>
<comment type="PTM">
    <text evidence="7 13">Phosphorylation at Thr-149 is required for its antiapoptotic effect by blocking death-inducing signaling complex (DISC) activity through the control of interaction with CASP8. Phosphorylation at Thr-149 results in translocation to mitochondria and this translocation enables the binding to CASP8 (PubMed:12191471). Dephosphorylated at Thr-149 by calcineurin; doesn't inhibit the association between FADD and CASP8 and the consequent apoptosis (PubMed:19001025).</text>
</comment>
<comment type="PTM">
    <text evidence="1 10">Polyubiquitinated by MDM2; promoting proteasomal-dependent degradation in response to apoptotic stimuli.</text>
</comment>
<sequence length="221" mass="24577">MGNMQERPSETIDRERKRLVETLQADSGLLLDALVARGVLTGPEYEALDALPDAERRVRRLLLLVQSKGEAACQELLRCAQQTVSMPDPAWDWQHVGPGYRDRSYDPPCPGHWTPEAPSSGTTCPGLPRASEEEEIGGPEDSEAVQPRTPEEPELEAEATKGDEPDLEQEMEPEPEPEVEPEPEPEPEPEPEPEPEPEPEPEPEREPDFQEGDESEGCENT</sequence>
<proteinExistence type="evidence at protein level"/>
<reference key="1">
    <citation type="journal article" date="1996" name="Biochim. Biophys. Acta">
        <title>Cloning and characterization of cDNAs for novel proteins with glutamic acid-proline dipeptide tandem repeats.</title>
        <authorList>
            <person name="Geertman R."/>
            <person name="McMahon A."/>
            <person name="Sabban E.L."/>
        </authorList>
    </citation>
    <scope>NUCLEOTIDE SEQUENCE [MRNA]</scope>
    <source>
        <strain>Sprague-Dawley</strain>
        <tissue>Brain</tissue>
        <tissue>Pheochromocytoma</tissue>
    </source>
</reference>
<reference key="2">
    <citation type="journal article" date="1999" name="Circ. Res.">
        <title>ARC inhibits cytochrome c release from mitochondria and protects against hypoxia-induced apoptosis in heart-derived H9c2 cells.</title>
        <authorList>
            <person name="Ekhterae D."/>
            <person name="Lin Z."/>
            <person name="Lundberg M.S."/>
            <person name="Crow M.T."/>
            <person name="Brosius F.C. III"/>
            <person name="Nunez G."/>
        </authorList>
    </citation>
    <scope>FUNCTION</scope>
    <scope>TISSUE SPECIFICITY</scope>
    <scope>SUBCELLULAR LOCATION</scope>
</reference>
<reference key="3">
    <citation type="journal article" date="2000" name="J. Biol. Chem.">
        <title>Molecular cloning and characterization of Amida, a novel protein which interacts with a neuron-specific immediate early gene product arc, contains novel nuclear localization signals, and causes cell death in cultured cells.</title>
        <authorList>
            <person name="Irie Y."/>
            <person name="Yamagata K."/>
            <person name="Gan Y."/>
            <person name="Miyamoto K."/>
            <person name="Do E."/>
            <person name="Kuo C.H."/>
            <person name="Taira E."/>
            <person name="Miki N."/>
        </authorList>
    </citation>
    <scope>INTERACTION WITH TFPT</scope>
</reference>
<reference key="4">
    <citation type="journal article" date="2002" name="Mol. Cell">
        <title>Phosphorylation by protein kinase CK2: a signaling switch for the caspase-inhibiting protein ARC.</title>
        <authorList>
            <person name="Li P.F."/>
            <person name="Li J."/>
            <person name="Mueller E.C."/>
            <person name="Otto A."/>
            <person name="Dietz R."/>
            <person name="von Harsdorf R."/>
        </authorList>
    </citation>
    <scope>IDENTIFICATION BY MASS SPECTROMETRY</scope>
    <scope>PHOSPHORYLATION AT THR-149</scope>
    <scope>MUTAGENESIS OF THR-149</scope>
    <scope>SUBCELLULAR LOCATION</scope>
    <scope>FUNCTION</scope>
</reference>
<reference key="5">
    <citation type="journal article" date="2004" name="Mol. Cell">
        <title>Inhibition of both the extrinsic and intrinsic death pathways through nonhomotypic death-fold interactions.</title>
        <authorList>
            <person name="Nam Y.J."/>
            <person name="Mani K."/>
            <person name="Ashton A.W."/>
            <person name="Peng C.F."/>
            <person name="Krishnamurthy B."/>
            <person name="Hayakawa Y."/>
            <person name="Lee P."/>
            <person name="Korsmeyer S.J."/>
            <person name="Kitsis R.N."/>
        </authorList>
    </citation>
    <scope>FUNCTION</scope>
    <scope>INTERACTION WITH FADD; FAS; CASP8 AND BAX</scope>
    <scope>MUTAGENESIS OF LEU-31 AND GLY-69</scope>
    <scope>DOMAIN</scope>
</reference>
<reference key="6">
    <citation type="journal article" date="2006" name="J. Cell. Biochem.">
        <title>ARC protects rat cardiomyocytes against oxidative stress through inhibition of caspase-2 mediated mitochondrial pathway.</title>
        <authorList>
            <person name="Zhang Y.Q."/>
            <person name="Herman B."/>
        </authorList>
    </citation>
    <scope>FUNCTION</scope>
    <scope>SUBCELLULAR LOCATION</scope>
    <scope>INTERACTION WITH CASP2; BAX AND PPM1G</scope>
    <scope>MUTAGENESIS OF THR-149</scope>
</reference>
<reference key="7">
    <citation type="journal article" date="2007" name="FEBS Lett.">
        <title>Apoptosis repressor with caspase recruitment domain (ARC) inhibits myogenic differentiation.</title>
        <authorList>
            <person name="Hunter A.L."/>
            <person name="Zhang J."/>
            <person name="Chen S.C."/>
            <person name="Si X."/>
            <person name="Wong B."/>
            <person name="Ekhterae D."/>
            <person name="Luo H."/>
            <person name="Granville D.J."/>
        </authorList>
    </citation>
    <scope>FUNCTION</scope>
</reference>
<reference key="8">
    <citation type="journal article" date="2007" name="J. Biol. Chem.">
        <title>Ubiquitination and degradation of the anti-apoptotic protein ARC by MDM2.</title>
        <authorList>
            <person name="Foo R.S."/>
            <person name="Chan L.K."/>
            <person name="Kitsis R.N."/>
            <person name="Bennett M.R."/>
        </authorList>
    </citation>
    <scope>UBIQUITINATION</scope>
</reference>
<reference key="9">
    <citation type="journal article" date="2008" name="Circulation">
        <title>Novel cardiac apoptotic pathway: the dephosphorylation of apoptosis repressor with caspase recruitment domain by calcineurin.</title>
        <authorList>
            <person name="Tan W.Q."/>
            <person name="Wang J.X."/>
            <person name="Lin Z.Q."/>
            <person name="Li Y.R."/>
            <person name="Lin Y."/>
            <person name="Li P.F."/>
        </authorList>
    </citation>
    <scope>DEPHOSPHORYLATION BY CALCINEURIN</scope>
    <scope>PHOSPHORYLATION AT THR-149</scope>
    <scope>MUTAGENESIS OF THR-149</scope>
</reference>
<reference key="10">
    <citation type="journal article" date="2008" name="Mol. Cell. Biol.">
        <title>p53 initiates apoptosis by transcriptionally targeting the antiapoptotic protein ARC.</title>
        <authorList>
            <person name="Li Y.Z."/>
            <person name="Lu D.Y."/>
            <person name="Tan W.Q."/>
            <person name="Wang J.X."/>
            <person name="Li P.F."/>
        </authorList>
    </citation>
    <scope>INDUCTION</scope>
    <scope>INTERACTION WITH BBC3 AND BAD</scope>
</reference>
<reference key="11">
    <citation type="journal article" date="2011" name="Circulation">
        <title>A critical role for the protein apoptosis repressor with caspase recruitment domain in hypoxia-induced pulmonary hypertension.</title>
        <authorList>
            <person name="Zaiman A.L."/>
            <person name="Damico R."/>
            <person name="Thoms-Chesley A."/>
            <person name="Files D.C."/>
            <person name="Kesari P."/>
            <person name="Johnston L."/>
            <person name="Swaim M."/>
            <person name="Mozammel S."/>
            <person name="Myers A.C."/>
            <person name="Halushka M."/>
            <person name="El-Haddad H."/>
            <person name="Shimoda L.A."/>
            <person name="Peng C.F."/>
            <person name="Hassoun P.M."/>
            <person name="Champion H.C."/>
            <person name="Kitsis R.N."/>
            <person name="Crow M.T."/>
        </authorList>
    </citation>
    <scope>INDUCTION</scope>
</reference>
<reference key="12">
    <citation type="journal article" date="2012" name="Nat. Commun.">
        <title>Quantitative maps of protein phosphorylation sites across 14 different rat organs and tissues.</title>
        <authorList>
            <person name="Lundby A."/>
            <person name="Secher A."/>
            <person name="Lage K."/>
            <person name="Nordsborg N.B."/>
            <person name="Dmytriyev A."/>
            <person name="Lundby C."/>
            <person name="Olsen J.V."/>
        </authorList>
    </citation>
    <scope>PHOSPHORYLATION [LARGE SCALE ANALYSIS] AT THR-149</scope>
    <scope>IDENTIFICATION BY MASS SPECTROMETRY [LARGE SCALE ANALYSIS]</scope>
</reference>
<reference key="13">
    <citation type="journal article" date="2013" name="J. Biol. Chem.">
        <title>Transcription factor Foxo3a prevents apoptosis by regulating calcium through the apoptosis repressor with caspase recruitment domain.</title>
        <authorList>
            <person name="Lu D."/>
            <person name="Liu J."/>
            <person name="Jiao J."/>
            <person name="Long B."/>
            <person name="Li Q."/>
            <person name="Tan W."/>
            <person name="Li P."/>
        </authorList>
    </citation>
    <scope>FUNCTION</scope>
    <scope>INDUCTION</scope>
    <scope>SUBCELLULAR LOCATION</scope>
</reference>
<evidence type="ECO:0000250" key="1">
    <source>
        <dbReference type="UniProtKB" id="O60936"/>
    </source>
</evidence>
<evidence type="ECO:0000250" key="2">
    <source>
        <dbReference type="UniProtKB" id="Q9D1X0"/>
    </source>
</evidence>
<evidence type="ECO:0000255" key="3">
    <source>
        <dbReference type="PROSITE-ProRule" id="PRU00046"/>
    </source>
</evidence>
<evidence type="ECO:0000256" key="4">
    <source>
        <dbReference type="SAM" id="MobiDB-lite"/>
    </source>
</evidence>
<evidence type="ECO:0000269" key="5">
    <source>
    </source>
</evidence>
<evidence type="ECO:0000269" key="6">
    <source>
    </source>
</evidence>
<evidence type="ECO:0000269" key="7">
    <source>
    </source>
</evidence>
<evidence type="ECO:0000269" key="8">
    <source>
    </source>
</evidence>
<evidence type="ECO:0000269" key="9">
    <source>
    </source>
</evidence>
<evidence type="ECO:0000269" key="10">
    <source>
    </source>
</evidence>
<evidence type="ECO:0000269" key="11">
    <source>
    </source>
</evidence>
<evidence type="ECO:0000269" key="12">
    <source>
    </source>
</evidence>
<evidence type="ECO:0000269" key="13">
    <source>
    </source>
</evidence>
<evidence type="ECO:0000269" key="14">
    <source>
    </source>
</evidence>
<evidence type="ECO:0000269" key="15">
    <source>
    </source>
</evidence>
<evidence type="ECO:0000305" key="16">
    <source>
    </source>
</evidence>
<evidence type="ECO:0007744" key="17">
    <source>
    </source>
</evidence>
<feature type="initiator methionine" description="Removed" evidence="1">
    <location>
        <position position="1"/>
    </location>
</feature>
<feature type="chain" id="PRO_0000144101" description="Nucleolar protein 3">
    <location>
        <begin position="2"/>
        <end position="221"/>
    </location>
</feature>
<feature type="domain" description="CARD" evidence="3">
    <location>
        <begin position="4"/>
        <end position="95"/>
    </location>
</feature>
<feature type="region of interest" description="Essential for interaction with BAX" evidence="8">
    <location>
        <begin position="20"/>
        <end position="70"/>
    </location>
</feature>
<feature type="region of interest" description="Disordered" evidence="4">
    <location>
        <begin position="107"/>
        <end position="221"/>
    </location>
</feature>
<feature type="compositionally biased region" description="Acidic residues" evidence="4">
    <location>
        <begin position="132"/>
        <end position="143"/>
    </location>
</feature>
<feature type="compositionally biased region" description="Acidic residues" evidence="4">
    <location>
        <begin position="165"/>
        <end position="201"/>
    </location>
</feature>
<feature type="compositionally biased region" description="Acidic residues" evidence="4">
    <location>
        <begin position="209"/>
        <end position="221"/>
    </location>
</feature>
<feature type="modified residue" description="Phosphothreonine; by CK2" evidence="7 17">
    <location>
        <position position="149"/>
    </location>
</feature>
<feature type="lipid moiety-binding region" description="N-myristoyl glycine" evidence="1">
    <location>
        <position position="2"/>
    </location>
</feature>
<feature type="mutagenesis site" description="Failed to protect against extrinsic and intrinsic apoptotic pathways; when associated with R-69. Not interferes with death-inducing signaling complex (DISC) assembly; when associated with R-69. Promotes BAX activation; when associated with R-69." evidence="8">
    <original>L</original>
    <variation>F</variation>
    <location>
        <position position="31"/>
    </location>
</feature>
<feature type="mutagenesis site" description="Failed to protect against extrinsic and intrinsic apoptotic pathways; when associated with F-31. Not interferes with DISC assembly; when associated with F-31. Promotes BAX activation; when associated with F-31." evidence="8">
    <original>G</original>
    <variation>R</variation>
    <location>
        <position position="69"/>
    </location>
</feature>
<feature type="mutagenesis site" description="Not phosphorylated by CK2. Loses the ability to block CASP8-, FAS-, or TNFRSF1A-induced apoptosis. Prevents translocation to mitochondria. Significantly decreases resistance to hydrogen peroxide-induced cell death. Doesn't interact with PPM1G, BAX and CASP2. Doesn't inhibit CASP2 and CASP3 activation. Doesn't was inhibit CASP8-induced apoptosis." evidence="7 9 13">
    <original>T</original>
    <variation>A</variation>
    <location>
        <position position="149"/>
    </location>
</feature>
<feature type="mutagenesis site" description="Significantly enhances resistance against hydrogen peroxide- and induced by isoproterenol or aldosterone-induced cell death." evidence="9 13">
    <original>T</original>
    <variation>D</variation>
    <location>
        <position position="149"/>
    </location>
</feature>
<gene>
    <name type="primary">Nol3</name>
    <name type="synonym">Arc</name>
</gene>
<accession>Q62881</accession>
<name>NOL3_RAT</name>
<organism>
    <name type="scientific">Rattus norvegicus</name>
    <name type="common">Rat</name>
    <dbReference type="NCBI Taxonomy" id="10116"/>
    <lineage>
        <taxon>Eukaryota</taxon>
        <taxon>Metazoa</taxon>
        <taxon>Chordata</taxon>
        <taxon>Craniata</taxon>
        <taxon>Vertebrata</taxon>
        <taxon>Euteleostomi</taxon>
        <taxon>Mammalia</taxon>
        <taxon>Eutheria</taxon>
        <taxon>Euarchontoglires</taxon>
        <taxon>Glires</taxon>
        <taxon>Rodentia</taxon>
        <taxon>Myomorpha</taxon>
        <taxon>Muroidea</taxon>
        <taxon>Muridae</taxon>
        <taxon>Murinae</taxon>
        <taxon>Rattus</taxon>
    </lineage>
</organism>
<protein>
    <recommendedName>
        <fullName>Nucleolar protein 3</fullName>
    </recommendedName>
    <alternativeName>
        <fullName>Apoptosis repressor with CARD</fullName>
    </alternativeName>
</protein>
<dbReference type="EMBL" id="U40627">
    <property type="protein sequence ID" value="AAB05667.1"/>
    <property type="molecule type" value="mRNA"/>
</dbReference>
<dbReference type="PIR" id="S70009">
    <property type="entry name" value="S70009"/>
</dbReference>
<dbReference type="RefSeq" id="NP_445968.2">
    <property type="nucleotide sequence ID" value="NM_053516.2"/>
</dbReference>
<dbReference type="SMR" id="Q62881"/>
<dbReference type="BioGRID" id="250088">
    <property type="interactions" value="2"/>
</dbReference>
<dbReference type="FunCoup" id="Q62881">
    <property type="interactions" value="127"/>
</dbReference>
<dbReference type="IntAct" id="Q62881">
    <property type="interactions" value="1"/>
</dbReference>
<dbReference type="STRING" id="10116.ENSRNOP00000020908"/>
<dbReference type="iPTMnet" id="Q62881"/>
<dbReference type="PhosphoSitePlus" id="Q62881"/>
<dbReference type="SwissPalm" id="Q62881"/>
<dbReference type="jPOST" id="Q62881"/>
<dbReference type="PaxDb" id="10116-ENSRNOP00000020908"/>
<dbReference type="GeneID" id="85383"/>
<dbReference type="KEGG" id="rno:85383"/>
<dbReference type="UCSC" id="RGD:708558">
    <property type="organism name" value="rat"/>
</dbReference>
<dbReference type="AGR" id="RGD:708558"/>
<dbReference type="CTD" id="8996"/>
<dbReference type="RGD" id="708558">
    <property type="gene designation" value="Nol3"/>
</dbReference>
<dbReference type="eggNOG" id="ENOG502SR4M">
    <property type="taxonomic scope" value="Eukaryota"/>
</dbReference>
<dbReference type="InParanoid" id="Q62881"/>
<dbReference type="PhylomeDB" id="Q62881"/>
<dbReference type="PRO" id="PR:Q62881"/>
<dbReference type="Proteomes" id="UP000002494">
    <property type="component" value="Unplaced"/>
</dbReference>
<dbReference type="GO" id="GO:0005737">
    <property type="term" value="C:cytoplasm"/>
    <property type="evidence" value="ECO:0000314"/>
    <property type="project" value="UniProtKB"/>
</dbReference>
<dbReference type="GO" id="GO:0016020">
    <property type="term" value="C:membrane"/>
    <property type="evidence" value="ECO:0007669"/>
    <property type="project" value="UniProtKB-SubCell"/>
</dbReference>
<dbReference type="GO" id="GO:0005739">
    <property type="term" value="C:mitochondrion"/>
    <property type="evidence" value="ECO:0000314"/>
    <property type="project" value="UniProtKB"/>
</dbReference>
<dbReference type="GO" id="GO:0005730">
    <property type="term" value="C:nucleolus"/>
    <property type="evidence" value="ECO:0000250"/>
    <property type="project" value="UniProtKB"/>
</dbReference>
<dbReference type="GO" id="GO:0016528">
    <property type="term" value="C:sarcoplasm"/>
    <property type="evidence" value="ECO:0000266"/>
    <property type="project" value="RGD"/>
</dbReference>
<dbReference type="GO" id="GO:0016529">
    <property type="term" value="C:sarcoplasmic reticulum"/>
    <property type="evidence" value="ECO:0000314"/>
    <property type="project" value="UniProtKB"/>
</dbReference>
<dbReference type="GO" id="GO:0005509">
    <property type="term" value="F:calcium ion binding"/>
    <property type="evidence" value="ECO:0000266"/>
    <property type="project" value="RGD"/>
</dbReference>
<dbReference type="GO" id="GO:0089720">
    <property type="term" value="F:caspase binding"/>
    <property type="evidence" value="ECO:0000353"/>
    <property type="project" value="UniProtKB"/>
</dbReference>
<dbReference type="GO" id="GO:0004869">
    <property type="term" value="F:cysteine-type endopeptidase inhibitor activity"/>
    <property type="evidence" value="ECO:0000315"/>
    <property type="project" value="UniProtKB"/>
</dbReference>
<dbReference type="GO" id="GO:0043027">
    <property type="term" value="F:cysteine-type endopeptidase inhibitor activity involved in apoptotic process"/>
    <property type="evidence" value="ECO:0000266"/>
    <property type="project" value="RGD"/>
</dbReference>
<dbReference type="GO" id="GO:0035877">
    <property type="term" value="F:death effector domain binding"/>
    <property type="evidence" value="ECO:0000353"/>
    <property type="project" value="UniProtKB"/>
</dbReference>
<dbReference type="GO" id="GO:0005123">
    <property type="term" value="F:death receptor binding"/>
    <property type="evidence" value="ECO:0000266"/>
    <property type="project" value="RGD"/>
</dbReference>
<dbReference type="GO" id="GO:0042802">
    <property type="term" value="F:identical protein binding"/>
    <property type="evidence" value="ECO:0000266"/>
    <property type="project" value="RGD"/>
</dbReference>
<dbReference type="GO" id="GO:0019900">
    <property type="term" value="F:kinase binding"/>
    <property type="evidence" value="ECO:0000353"/>
    <property type="project" value="UniProtKB"/>
</dbReference>
<dbReference type="GO" id="GO:0019902">
    <property type="term" value="F:phosphatase binding"/>
    <property type="evidence" value="ECO:0000353"/>
    <property type="project" value="UniProtKB"/>
</dbReference>
<dbReference type="GO" id="GO:0005102">
    <property type="term" value="F:signaling receptor binding"/>
    <property type="evidence" value="ECO:0000266"/>
    <property type="project" value="RGD"/>
</dbReference>
<dbReference type="GO" id="GO:0001974">
    <property type="term" value="P:blood vessel remodeling"/>
    <property type="evidence" value="ECO:0000266"/>
    <property type="project" value="RGD"/>
</dbReference>
<dbReference type="GO" id="GO:0010659">
    <property type="term" value="P:cardiac muscle cell apoptotic process"/>
    <property type="evidence" value="ECO:0000266"/>
    <property type="project" value="RGD"/>
</dbReference>
<dbReference type="GO" id="GO:0070301">
    <property type="term" value="P:cellular response to hydrogen peroxide"/>
    <property type="evidence" value="ECO:0000270"/>
    <property type="project" value="RGD"/>
</dbReference>
<dbReference type="GO" id="GO:0071456">
    <property type="term" value="P:cellular response to hypoxia"/>
    <property type="evidence" value="ECO:0000314"/>
    <property type="project" value="UniProtKB"/>
</dbReference>
<dbReference type="GO" id="GO:0097193">
    <property type="term" value="P:intrinsic apoptotic signaling pathway"/>
    <property type="evidence" value="ECO:0000266"/>
    <property type="project" value="RGD"/>
</dbReference>
<dbReference type="GO" id="GO:0006376">
    <property type="term" value="P:mRNA splice site recognition"/>
    <property type="evidence" value="ECO:0000250"/>
    <property type="project" value="UniProtKB"/>
</dbReference>
<dbReference type="GO" id="GO:0045445">
    <property type="term" value="P:myoblast differentiation"/>
    <property type="evidence" value="ECO:0000314"/>
    <property type="project" value="UniProtKB"/>
</dbReference>
<dbReference type="GO" id="GO:0043066">
    <property type="term" value="P:negative regulation of apoptotic process"/>
    <property type="evidence" value="ECO:0000314"/>
    <property type="project" value="UniProtKB"/>
</dbReference>
<dbReference type="GO" id="GO:0010667">
    <property type="term" value="P:negative regulation of cardiac muscle cell apoptotic process"/>
    <property type="evidence" value="ECO:0000266"/>
    <property type="project" value="RGD"/>
</dbReference>
<dbReference type="GO" id="GO:0051481">
    <property type="term" value="P:negative regulation of cytosolic calcium ion concentration"/>
    <property type="evidence" value="ECO:0000315"/>
    <property type="project" value="UniProtKB"/>
</dbReference>
<dbReference type="GO" id="GO:1903073">
    <property type="term" value="P:negative regulation of death-inducing signaling complex assembly"/>
    <property type="evidence" value="ECO:0000314"/>
    <property type="project" value="UniProtKB"/>
</dbReference>
<dbReference type="GO" id="GO:2001237">
    <property type="term" value="P:negative regulation of extrinsic apoptotic signaling pathway"/>
    <property type="evidence" value="ECO:0000266"/>
    <property type="project" value="RGD"/>
</dbReference>
<dbReference type="GO" id="GO:1902042">
    <property type="term" value="P:negative regulation of extrinsic apoptotic signaling pathway via death domain receptors"/>
    <property type="evidence" value="ECO:0000315"/>
    <property type="project" value="UniProtKB"/>
</dbReference>
<dbReference type="GO" id="GO:1903298">
    <property type="term" value="P:negative regulation of hypoxia-induced intrinsic apoptotic signaling pathway"/>
    <property type="evidence" value="ECO:0000314"/>
    <property type="project" value="UniProtKB"/>
</dbReference>
<dbReference type="GO" id="GO:2001243">
    <property type="term" value="P:negative regulation of intrinsic apoptotic signaling pathway"/>
    <property type="evidence" value="ECO:0000315"/>
    <property type="project" value="UniProtKB"/>
</dbReference>
<dbReference type="GO" id="GO:0051562">
    <property type="term" value="P:negative regulation of mitochondrial calcium ion concentration"/>
    <property type="evidence" value="ECO:0000314"/>
    <property type="project" value="UniProtKB"/>
</dbReference>
<dbReference type="GO" id="GO:1902109">
    <property type="term" value="P:negative regulation of mitochondrial membrane permeability involved in apoptotic process"/>
    <property type="evidence" value="ECO:0000266"/>
    <property type="project" value="RGD"/>
</dbReference>
<dbReference type="GO" id="GO:0014736">
    <property type="term" value="P:negative regulation of muscle atrophy"/>
    <property type="evidence" value="ECO:0000266"/>
    <property type="project" value="RGD"/>
</dbReference>
<dbReference type="GO" id="GO:1902176">
    <property type="term" value="P:negative regulation of oxidative stress-induced intrinsic apoptotic signaling pathway"/>
    <property type="evidence" value="ECO:0000266"/>
    <property type="project" value="RGD"/>
</dbReference>
<dbReference type="GO" id="GO:0062099">
    <property type="term" value="P:negative regulation of programmed necrotic cell death"/>
    <property type="evidence" value="ECO:0000266"/>
    <property type="project" value="RGD"/>
</dbReference>
<dbReference type="GO" id="GO:1903215">
    <property type="term" value="P:negative regulation of protein targeting to mitochondrion"/>
    <property type="evidence" value="ECO:0000314"/>
    <property type="project" value="UniProtKB"/>
</dbReference>
<dbReference type="GO" id="GO:0090201">
    <property type="term" value="P:negative regulation of release of cytochrome c from mitochondria"/>
    <property type="evidence" value="ECO:0000314"/>
    <property type="project" value="UniProtKB"/>
</dbReference>
<dbReference type="GO" id="GO:0010664">
    <property type="term" value="P:negative regulation of striated muscle cell apoptotic process"/>
    <property type="evidence" value="ECO:0000266"/>
    <property type="project" value="RGD"/>
</dbReference>
<dbReference type="GO" id="GO:0010804">
    <property type="term" value="P:negative regulation of tumor necrosis factor-mediated signaling pathway"/>
    <property type="evidence" value="ECO:0000266"/>
    <property type="project" value="RGD"/>
</dbReference>
<dbReference type="GO" id="GO:0051259">
    <property type="term" value="P:protein complex oligomerization"/>
    <property type="evidence" value="ECO:0000250"/>
    <property type="project" value="UniProtKB"/>
</dbReference>
<dbReference type="GO" id="GO:0042981">
    <property type="term" value="P:regulation of apoptotic process"/>
    <property type="evidence" value="ECO:0000304"/>
    <property type="project" value="RGD"/>
</dbReference>
<dbReference type="GO" id="GO:0010468">
    <property type="term" value="P:regulation of gene expression"/>
    <property type="evidence" value="ECO:0000266"/>
    <property type="project" value="RGD"/>
</dbReference>
<dbReference type="GO" id="GO:1901222">
    <property type="term" value="P:regulation of non-canonical NF-kappaB signal transduction"/>
    <property type="evidence" value="ECO:0000266"/>
    <property type="project" value="RGD"/>
</dbReference>
<dbReference type="GO" id="GO:0010880">
    <property type="term" value="P:regulation of release of sequestered calcium ion into cytosol by sarcoplasmic reticulum"/>
    <property type="evidence" value="ECO:0000315"/>
    <property type="project" value="UniProtKB"/>
</dbReference>
<dbReference type="GO" id="GO:0014808">
    <property type="term" value="P:release of sequestered calcium ion into cytosol by sarcoplasmic reticulum"/>
    <property type="evidence" value="ECO:0000266"/>
    <property type="project" value="RGD"/>
</dbReference>
<dbReference type="GO" id="GO:0001666">
    <property type="term" value="P:response to hypoxia"/>
    <property type="evidence" value="ECO:0000270"/>
    <property type="project" value="RGD"/>
</dbReference>
<dbReference type="GO" id="GO:0014876">
    <property type="term" value="P:response to injury involved in regulation of muscle adaptation"/>
    <property type="evidence" value="ECO:0000266"/>
    <property type="project" value="RGD"/>
</dbReference>
<dbReference type="GO" id="GO:0002931">
    <property type="term" value="P:response to ischemia"/>
    <property type="evidence" value="ECO:0000266"/>
    <property type="project" value="RGD"/>
</dbReference>
<dbReference type="GO" id="GO:0048659">
    <property type="term" value="P:smooth muscle cell proliferation"/>
    <property type="evidence" value="ECO:0000315"/>
    <property type="project" value="UniProtKB"/>
</dbReference>
<dbReference type="CDD" id="cd01671">
    <property type="entry name" value="CARD"/>
    <property type="match status" value="1"/>
</dbReference>
<dbReference type="FunFam" id="1.10.533.10:FF:000035">
    <property type="entry name" value="nucleolar protein 3 isoform X5"/>
    <property type="match status" value="1"/>
</dbReference>
<dbReference type="Gene3D" id="1.10.533.10">
    <property type="entry name" value="Death Domain, Fas"/>
    <property type="match status" value="1"/>
</dbReference>
<dbReference type="InterPro" id="IPR052685">
    <property type="entry name" value="Apoptosis_Repressor_CARD"/>
</dbReference>
<dbReference type="InterPro" id="IPR001315">
    <property type="entry name" value="CARD"/>
</dbReference>
<dbReference type="InterPro" id="IPR011029">
    <property type="entry name" value="DEATH-like_dom_sf"/>
</dbReference>
<dbReference type="PANTHER" id="PTHR22797">
    <property type="entry name" value="CARD6/NUCLEOLAR PROTEIN 3"/>
    <property type="match status" value="1"/>
</dbReference>
<dbReference type="PANTHER" id="PTHR22797:SF37">
    <property type="entry name" value="NUCLEOLAR PROTEIN 3"/>
    <property type="match status" value="1"/>
</dbReference>
<dbReference type="Pfam" id="PF00619">
    <property type="entry name" value="CARD"/>
    <property type="match status" value="1"/>
</dbReference>
<dbReference type="SMART" id="SM00114">
    <property type="entry name" value="CARD"/>
    <property type="match status" value="1"/>
</dbReference>
<dbReference type="SUPFAM" id="SSF47986">
    <property type="entry name" value="DEATH domain"/>
    <property type="match status" value="1"/>
</dbReference>
<dbReference type="PROSITE" id="PS50209">
    <property type="entry name" value="CARD"/>
    <property type="match status" value="1"/>
</dbReference>